<sequence>MTWQQRIERALDERQQTDAFRRRLPVSHGAGRWLEREGERWLNFSSNDYLGLSQHAGIIAAWQQGAERYGVGSGGSGHVSGYSEAHRALEEELADWLGYPRALLFISGFAANQALVAALAEKEDRIVADRLSHASLLEAASLSPAQLRRFAHNDPQQLAQLLAKPLDGLQLVVTEGIFSMDGDSAPLADIQAAARSAGALLLVDDAHGIGAIGDEGRGSCHTQAVRPELLVVTFGKAFGVSGAAVLCSESMADYLLQFARHLIYSTAMPPAQAVALSAALRVIRSDEGQQRRETLAARIRQFRAGMGDVSLGLTDSVSAIQPLIVGDNARALSLACRLREAGCWATAIRPPTVPVGSARLRLTLTAAHQAEDINRLLEALHGHGE</sequence>
<organism>
    <name type="scientific">Klebsiella pneumoniae (strain 342)</name>
    <dbReference type="NCBI Taxonomy" id="507522"/>
    <lineage>
        <taxon>Bacteria</taxon>
        <taxon>Pseudomonadati</taxon>
        <taxon>Pseudomonadota</taxon>
        <taxon>Gammaproteobacteria</taxon>
        <taxon>Enterobacterales</taxon>
        <taxon>Enterobacteriaceae</taxon>
        <taxon>Klebsiella/Raoultella group</taxon>
        <taxon>Klebsiella</taxon>
        <taxon>Klebsiella pneumoniae complex</taxon>
    </lineage>
</organism>
<evidence type="ECO:0000255" key="1">
    <source>
        <dbReference type="HAMAP-Rule" id="MF_01693"/>
    </source>
</evidence>
<comment type="function">
    <text evidence="1">Catalyzes the decarboxylative condensation of pimeloyl-[acyl-carrier protein] and L-alanine to produce 8-amino-7-oxononanoate (AON), [acyl-carrier protein], and carbon dioxide.</text>
</comment>
<comment type="catalytic activity">
    <reaction evidence="1">
        <text>6-carboxyhexanoyl-[ACP] + L-alanine + H(+) = (8S)-8-amino-7-oxononanoate + holo-[ACP] + CO2</text>
        <dbReference type="Rhea" id="RHEA:42288"/>
        <dbReference type="Rhea" id="RHEA-COMP:9685"/>
        <dbReference type="Rhea" id="RHEA-COMP:9955"/>
        <dbReference type="ChEBI" id="CHEBI:15378"/>
        <dbReference type="ChEBI" id="CHEBI:16526"/>
        <dbReference type="ChEBI" id="CHEBI:57972"/>
        <dbReference type="ChEBI" id="CHEBI:64479"/>
        <dbReference type="ChEBI" id="CHEBI:78846"/>
        <dbReference type="ChEBI" id="CHEBI:149468"/>
        <dbReference type="EC" id="2.3.1.47"/>
    </reaction>
</comment>
<comment type="cofactor">
    <cofactor evidence="1">
        <name>pyridoxal 5'-phosphate</name>
        <dbReference type="ChEBI" id="CHEBI:597326"/>
    </cofactor>
</comment>
<comment type="pathway">
    <text evidence="1">Cofactor biosynthesis; biotin biosynthesis.</text>
</comment>
<comment type="subunit">
    <text evidence="1">Homodimer.</text>
</comment>
<comment type="similarity">
    <text evidence="1">Belongs to the class-II pyridoxal-phosphate-dependent aminotransferase family. BioF subfamily.</text>
</comment>
<accession>B5XZ74</accession>
<reference key="1">
    <citation type="journal article" date="2008" name="PLoS Genet.">
        <title>Complete genome sequence of the N2-fixing broad host range endophyte Klebsiella pneumoniae 342 and virulence predictions verified in mice.</title>
        <authorList>
            <person name="Fouts D.E."/>
            <person name="Tyler H.L."/>
            <person name="DeBoy R.T."/>
            <person name="Daugherty S."/>
            <person name="Ren Q."/>
            <person name="Badger J.H."/>
            <person name="Durkin A.S."/>
            <person name="Huot H."/>
            <person name="Shrivastava S."/>
            <person name="Kothari S."/>
            <person name="Dodson R.J."/>
            <person name="Mohamoud Y."/>
            <person name="Khouri H."/>
            <person name="Roesch L.F.W."/>
            <person name="Krogfelt K.A."/>
            <person name="Struve C."/>
            <person name="Triplett E.W."/>
            <person name="Methe B.A."/>
        </authorList>
    </citation>
    <scope>NUCLEOTIDE SEQUENCE [LARGE SCALE GENOMIC DNA]</scope>
    <source>
        <strain>342</strain>
    </source>
</reference>
<gene>
    <name evidence="1" type="primary">bioF</name>
    <name type="ordered locus">KPK_3772</name>
</gene>
<dbReference type="EC" id="2.3.1.47" evidence="1"/>
<dbReference type="EMBL" id="CP000964">
    <property type="protein sequence ID" value="ACI11436.1"/>
    <property type="molecule type" value="Genomic_DNA"/>
</dbReference>
<dbReference type="SMR" id="B5XZ74"/>
<dbReference type="KEGG" id="kpe:KPK_3772"/>
<dbReference type="HOGENOM" id="CLU_015846_11_2_6"/>
<dbReference type="UniPathway" id="UPA00078"/>
<dbReference type="Proteomes" id="UP000001734">
    <property type="component" value="Chromosome"/>
</dbReference>
<dbReference type="GO" id="GO:0008710">
    <property type="term" value="F:8-amino-7-oxononanoate synthase activity"/>
    <property type="evidence" value="ECO:0007669"/>
    <property type="project" value="UniProtKB-UniRule"/>
</dbReference>
<dbReference type="GO" id="GO:0030170">
    <property type="term" value="F:pyridoxal phosphate binding"/>
    <property type="evidence" value="ECO:0007669"/>
    <property type="project" value="UniProtKB-UniRule"/>
</dbReference>
<dbReference type="GO" id="GO:0009102">
    <property type="term" value="P:biotin biosynthetic process"/>
    <property type="evidence" value="ECO:0007669"/>
    <property type="project" value="UniProtKB-UniRule"/>
</dbReference>
<dbReference type="Gene3D" id="3.90.1150.10">
    <property type="entry name" value="Aspartate Aminotransferase, domain 1"/>
    <property type="match status" value="1"/>
</dbReference>
<dbReference type="Gene3D" id="3.40.640.10">
    <property type="entry name" value="Type I PLP-dependent aspartate aminotransferase-like (Major domain)"/>
    <property type="match status" value="1"/>
</dbReference>
<dbReference type="HAMAP" id="MF_01693">
    <property type="entry name" value="BioF_aminotrans_2"/>
    <property type="match status" value="1"/>
</dbReference>
<dbReference type="InterPro" id="IPR001917">
    <property type="entry name" value="Aminotrans_II_pyridoxalP_BS"/>
</dbReference>
<dbReference type="InterPro" id="IPR004839">
    <property type="entry name" value="Aminotransferase_I/II_large"/>
</dbReference>
<dbReference type="InterPro" id="IPR050087">
    <property type="entry name" value="AON_synthase_class-II"/>
</dbReference>
<dbReference type="InterPro" id="IPR004723">
    <property type="entry name" value="AONS_Archaea/Proteobacteria"/>
</dbReference>
<dbReference type="InterPro" id="IPR022834">
    <property type="entry name" value="AONS_Proteobacteria"/>
</dbReference>
<dbReference type="InterPro" id="IPR015424">
    <property type="entry name" value="PyrdxlP-dep_Trfase"/>
</dbReference>
<dbReference type="InterPro" id="IPR015421">
    <property type="entry name" value="PyrdxlP-dep_Trfase_major"/>
</dbReference>
<dbReference type="InterPro" id="IPR015422">
    <property type="entry name" value="PyrdxlP-dep_Trfase_small"/>
</dbReference>
<dbReference type="NCBIfam" id="TIGR00858">
    <property type="entry name" value="bioF"/>
    <property type="match status" value="1"/>
</dbReference>
<dbReference type="PANTHER" id="PTHR13693:SF100">
    <property type="entry name" value="8-AMINO-7-OXONONANOATE SYNTHASE"/>
    <property type="match status" value="1"/>
</dbReference>
<dbReference type="PANTHER" id="PTHR13693">
    <property type="entry name" value="CLASS II AMINOTRANSFERASE/8-AMINO-7-OXONONANOATE SYNTHASE"/>
    <property type="match status" value="1"/>
</dbReference>
<dbReference type="Pfam" id="PF00155">
    <property type="entry name" value="Aminotran_1_2"/>
    <property type="match status" value="1"/>
</dbReference>
<dbReference type="SUPFAM" id="SSF53383">
    <property type="entry name" value="PLP-dependent transferases"/>
    <property type="match status" value="1"/>
</dbReference>
<dbReference type="PROSITE" id="PS00599">
    <property type="entry name" value="AA_TRANSFER_CLASS_2"/>
    <property type="match status" value="1"/>
</dbReference>
<protein>
    <recommendedName>
        <fullName evidence="1">8-amino-7-oxononanoate synthase</fullName>
        <shortName evidence="1">AONS</shortName>
        <ecNumber evidence="1">2.3.1.47</ecNumber>
    </recommendedName>
    <alternativeName>
        <fullName evidence="1">7-keto-8-amino-pelargonic acid synthase</fullName>
        <shortName evidence="1">7-KAP synthase</shortName>
        <shortName evidence="1">KAPA synthase</shortName>
    </alternativeName>
    <alternativeName>
        <fullName evidence="1">8-amino-7-ketopelargonate synthase</fullName>
    </alternativeName>
</protein>
<name>BIOF_KLEP3</name>
<proteinExistence type="inferred from homology"/>
<keyword id="KW-0093">Biotin biosynthesis</keyword>
<keyword id="KW-0663">Pyridoxal phosphate</keyword>
<keyword id="KW-0808">Transferase</keyword>
<feature type="chain" id="PRO_0000381012" description="8-amino-7-oxononanoate synthase">
    <location>
        <begin position="1"/>
        <end position="385"/>
    </location>
</feature>
<feature type="binding site" evidence="1">
    <location>
        <position position="21"/>
    </location>
    <ligand>
        <name>substrate</name>
    </ligand>
</feature>
<feature type="binding site" evidence="1">
    <location>
        <begin position="108"/>
        <end position="109"/>
    </location>
    <ligand>
        <name>pyridoxal 5'-phosphate</name>
        <dbReference type="ChEBI" id="CHEBI:597326"/>
    </ligand>
</feature>
<feature type="binding site" evidence="1">
    <location>
        <position position="133"/>
    </location>
    <ligand>
        <name>substrate</name>
    </ligand>
</feature>
<feature type="binding site" evidence="1">
    <location>
        <position position="179"/>
    </location>
    <ligand>
        <name>pyridoxal 5'-phosphate</name>
        <dbReference type="ChEBI" id="CHEBI:597326"/>
    </ligand>
</feature>
<feature type="binding site" evidence="1">
    <location>
        <position position="207"/>
    </location>
    <ligand>
        <name>pyridoxal 5'-phosphate</name>
        <dbReference type="ChEBI" id="CHEBI:597326"/>
    </ligand>
</feature>
<feature type="binding site" evidence="1">
    <location>
        <position position="233"/>
    </location>
    <ligand>
        <name>pyridoxal 5'-phosphate</name>
        <dbReference type="ChEBI" id="CHEBI:597326"/>
    </ligand>
</feature>
<feature type="binding site" evidence="1">
    <location>
        <position position="352"/>
    </location>
    <ligand>
        <name>substrate</name>
    </ligand>
</feature>
<feature type="modified residue" description="N6-(pyridoxal phosphate)lysine" evidence="1">
    <location>
        <position position="236"/>
    </location>
</feature>